<feature type="chain" id="PRO_1000125183" description="Sec-independent protein translocase protein TatA">
    <location>
        <begin position="1"/>
        <end position="64"/>
    </location>
</feature>
<feature type="transmembrane region" description="Helical" evidence="1">
    <location>
        <begin position="10"/>
        <end position="30"/>
    </location>
</feature>
<gene>
    <name evidence="1" type="primary">tatA</name>
    <name type="ordered locus">Clos_1101</name>
</gene>
<keyword id="KW-1003">Cell membrane</keyword>
<keyword id="KW-0472">Membrane</keyword>
<keyword id="KW-0653">Protein transport</keyword>
<keyword id="KW-1185">Reference proteome</keyword>
<keyword id="KW-0811">Translocation</keyword>
<keyword id="KW-0812">Transmembrane</keyword>
<keyword id="KW-1133">Transmembrane helix</keyword>
<keyword id="KW-0813">Transport</keyword>
<protein>
    <recommendedName>
        <fullName evidence="1">Sec-independent protein translocase protein TatA</fullName>
    </recommendedName>
</protein>
<reference key="1">
    <citation type="submission" date="2007-10" db="EMBL/GenBank/DDBJ databases">
        <title>Complete genome of Alkaliphilus oremlandii OhILAs.</title>
        <authorList>
            <person name="Copeland A."/>
            <person name="Lucas S."/>
            <person name="Lapidus A."/>
            <person name="Barry K."/>
            <person name="Detter J.C."/>
            <person name="Glavina del Rio T."/>
            <person name="Hammon N."/>
            <person name="Israni S."/>
            <person name="Dalin E."/>
            <person name="Tice H."/>
            <person name="Pitluck S."/>
            <person name="Chain P."/>
            <person name="Malfatti S."/>
            <person name="Shin M."/>
            <person name="Vergez L."/>
            <person name="Schmutz J."/>
            <person name="Larimer F."/>
            <person name="Land M."/>
            <person name="Hauser L."/>
            <person name="Kyrpides N."/>
            <person name="Mikhailova N."/>
            <person name="Stolz J.F."/>
            <person name="Dawson A."/>
            <person name="Fisher E."/>
            <person name="Crable B."/>
            <person name="Perera E."/>
            <person name="Lisak J."/>
            <person name="Ranganathan M."/>
            <person name="Basu P."/>
            <person name="Richardson P."/>
        </authorList>
    </citation>
    <scope>NUCLEOTIDE SEQUENCE [LARGE SCALE GENOMIC DNA]</scope>
    <source>
        <strain>OhILAs</strain>
    </source>
</reference>
<accession>A8MGV3</accession>
<evidence type="ECO:0000255" key="1">
    <source>
        <dbReference type="HAMAP-Rule" id="MF_00236"/>
    </source>
</evidence>
<dbReference type="EMBL" id="CP000853">
    <property type="protein sequence ID" value="ABW18647.1"/>
    <property type="molecule type" value="Genomic_DNA"/>
</dbReference>
<dbReference type="SMR" id="A8MGV3"/>
<dbReference type="STRING" id="350688.Clos_1101"/>
<dbReference type="KEGG" id="aoe:Clos_1101"/>
<dbReference type="eggNOG" id="COG1826">
    <property type="taxonomic scope" value="Bacteria"/>
</dbReference>
<dbReference type="HOGENOM" id="CLU_086034_6_0_9"/>
<dbReference type="OrthoDB" id="9800908at2"/>
<dbReference type="Proteomes" id="UP000000269">
    <property type="component" value="Chromosome"/>
</dbReference>
<dbReference type="GO" id="GO:0033281">
    <property type="term" value="C:TAT protein transport complex"/>
    <property type="evidence" value="ECO:0007669"/>
    <property type="project" value="UniProtKB-UniRule"/>
</dbReference>
<dbReference type="GO" id="GO:0008320">
    <property type="term" value="F:protein transmembrane transporter activity"/>
    <property type="evidence" value="ECO:0007669"/>
    <property type="project" value="UniProtKB-UniRule"/>
</dbReference>
<dbReference type="GO" id="GO:0043953">
    <property type="term" value="P:protein transport by the Tat complex"/>
    <property type="evidence" value="ECO:0007669"/>
    <property type="project" value="UniProtKB-UniRule"/>
</dbReference>
<dbReference type="Gene3D" id="1.20.5.3310">
    <property type="match status" value="1"/>
</dbReference>
<dbReference type="HAMAP" id="MF_00236">
    <property type="entry name" value="TatA_E"/>
    <property type="match status" value="1"/>
</dbReference>
<dbReference type="InterPro" id="IPR003369">
    <property type="entry name" value="TatA/B/E"/>
</dbReference>
<dbReference type="InterPro" id="IPR006312">
    <property type="entry name" value="TatA/E"/>
</dbReference>
<dbReference type="NCBIfam" id="NF011430">
    <property type="entry name" value="PRK14861.1"/>
    <property type="match status" value="1"/>
</dbReference>
<dbReference type="NCBIfam" id="TIGR01411">
    <property type="entry name" value="tatAE"/>
    <property type="match status" value="1"/>
</dbReference>
<dbReference type="PANTHER" id="PTHR42982">
    <property type="entry name" value="SEC-INDEPENDENT PROTEIN TRANSLOCASE PROTEIN TATA"/>
    <property type="match status" value="1"/>
</dbReference>
<dbReference type="PANTHER" id="PTHR42982:SF1">
    <property type="entry name" value="SEC-INDEPENDENT PROTEIN TRANSLOCASE PROTEIN TATA"/>
    <property type="match status" value="1"/>
</dbReference>
<dbReference type="Pfam" id="PF02416">
    <property type="entry name" value="TatA_B_E"/>
    <property type="match status" value="1"/>
</dbReference>
<dbReference type="PRINTS" id="PR01506">
    <property type="entry name" value="TATBPROTEIN"/>
</dbReference>
<organism>
    <name type="scientific">Alkaliphilus oremlandii (strain OhILAs)</name>
    <name type="common">Clostridium oremlandii (strain OhILAs)</name>
    <dbReference type="NCBI Taxonomy" id="350688"/>
    <lineage>
        <taxon>Bacteria</taxon>
        <taxon>Bacillati</taxon>
        <taxon>Bacillota</taxon>
        <taxon>Clostridia</taxon>
        <taxon>Peptostreptococcales</taxon>
        <taxon>Natronincolaceae</taxon>
        <taxon>Alkaliphilus</taxon>
    </lineage>
</organism>
<proteinExistence type="inferred from homology"/>
<name>TATA_ALKOO</name>
<sequence>MFGKLGTSELVLILGIALIIFGPGKLPELGKSLGKAISEFKSFSKEVKEDISLDDKKANNTLND</sequence>
<comment type="function">
    <text evidence="1">Part of the twin-arginine translocation (Tat) system that transports large folded proteins containing a characteristic twin-arginine motif in their signal peptide across membranes. TatA could form the protein-conducting channel of the Tat system.</text>
</comment>
<comment type="subunit">
    <text evidence="1">Forms a complex with TatC.</text>
</comment>
<comment type="subcellular location">
    <subcellularLocation>
        <location evidence="1">Cell membrane</location>
        <topology evidence="1">Single-pass membrane protein</topology>
    </subcellularLocation>
</comment>
<comment type="similarity">
    <text evidence="1">Belongs to the TatA/E family.</text>
</comment>